<accession>P45693</accession>
<keyword id="KW-0131">Cell cycle</keyword>
<keyword id="KW-0132">Cell division</keyword>
<keyword id="KW-1185">Reference proteome</keyword>
<keyword id="KW-0717">Septation</keyword>
<keyword id="KW-0749">Sporulation</keyword>
<evidence type="ECO:0000269" key="1">
    <source>
    </source>
</evidence>
<evidence type="ECO:0000303" key="2">
    <source>
    </source>
</evidence>
<evidence type="ECO:0000305" key="3"/>
<sequence length="86" mass="8796">MEILKVSAKSSPNSVAGALAGVLRERGAAEIQAIGAGALNQAVKAVAIARGFVAPSGVDLICIPAFTDIQIDGEERTAIKLIVEPR</sequence>
<feature type="chain" id="PRO_0000072087" description="Stage V sporulation protein S">
    <location>
        <begin position="1"/>
        <end position="86"/>
    </location>
</feature>
<feature type="mutagenesis site" description="In spoVS11-4; impaired sporulation." evidence="1">
    <original>A</original>
    <variation>T</variation>
    <location>
        <position position="16"/>
    </location>
</feature>
<feature type="mutagenesis site" description="In spoVS8-9; impaired sporulation." evidence="1">
    <original>A</original>
    <variation>T</variation>
    <location>
        <position position="38"/>
    </location>
</feature>
<feature type="mutagenesis site" description="In spoVS9-4; impaired sporulation." evidence="1">
    <original>A</original>
    <variation>V</variation>
    <location>
        <position position="42"/>
    </location>
</feature>
<protein>
    <recommendedName>
        <fullName evidence="3">Stage V sporulation protein S</fullName>
    </recommendedName>
</protein>
<reference key="1">
    <citation type="journal article" date="1995" name="J. Bacteriol.">
        <title>Identification and characterization of sporulation gene spoVS from Bacillus subtilis.</title>
        <authorList>
            <person name="Resnekov O."/>
            <person name="Driks A."/>
            <person name="Losick R."/>
        </authorList>
    </citation>
    <scope>NUCLEOTIDE SEQUENCE [GENOMIC DNA]</scope>
    <scope>FUNCTION</scope>
    <scope>INDUCTION</scope>
    <scope>MUTAGENESIS OF ALA-16; ALA-38 AND ALA-42</scope>
    <source>
        <strain>168 / PY79</strain>
    </source>
</reference>
<reference key="2">
    <citation type="journal article" date="1997" name="Nature">
        <title>The complete genome sequence of the Gram-positive bacterium Bacillus subtilis.</title>
        <authorList>
            <person name="Kunst F."/>
            <person name="Ogasawara N."/>
            <person name="Moszer I."/>
            <person name="Albertini A.M."/>
            <person name="Alloni G."/>
            <person name="Azevedo V."/>
            <person name="Bertero M.G."/>
            <person name="Bessieres P."/>
            <person name="Bolotin A."/>
            <person name="Borchert S."/>
            <person name="Borriss R."/>
            <person name="Boursier L."/>
            <person name="Brans A."/>
            <person name="Braun M."/>
            <person name="Brignell S.C."/>
            <person name="Bron S."/>
            <person name="Brouillet S."/>
            <person name="Bruschi C.V."/>
            <person name="Caldwell B."/>
            <person name="Capuano V."/>
            <person name="Carter N.M."/>
            <person name="Choi S.-K."/>
            <person name="Codani J.-J."/>
            <person name="Connerton I.F."/>
            <person name="Cummings N.J."/>
            <person name="Daniel R.A."/>
            <person name="Denizot F."/>
            <person name="Devine K.M."/>
            <person name="Duesterhoeft A."/>
            <person name="Ehrlich S.D."/>
            <person name="Emmerson P.T."/>
            <person name="Entian K.-D."/>
            <person name="Errington J."/>
            <person name="Fabret C."/>
            <person name="Ferrari E."/>
            <person name="Foulger D."/>
            <person name="Fritz C."/>
            <person name="Fujita M."/>
            <person name="Fujita Y."/>
            <person name="Fuma S."/>
            <person name="Galizzi A."/>
            <person name="Galleron N."/>
            <person name="Ghim S.-Y."/>
            <person name="Glaser P."/>
            <person name="Goffeau A."/>
            <person name="Golightly E.J."/>
            <person name="Grandi G."/>
            <person name="Guiseppi G."/>
            <person name="Guy B.J."/>
            <person name="Haga K."/>
            <person name="Haiech J."/>
            <person name="Harwood C.R."/>
            <person name="Henaut A."/>
            <person name="Hilbert H."/>
            <person name="Holsappel S."/>
            <person name="Hosono S."/>
            <person name="Hullo M.-F."/>
            <person name="Itaya M."/>
            <person name="Jones L.-M."/>
            <person name="Joris B."/>
            <person name="Karamata D."/>
            <person name="Kasahara Y."/>
            <person name="Klaerr-Blanchard M."/>
            <person name="Klein C."/>
            <person name="Kobayashi Y."/>
            <person name="Koetter P."/>
            <person name="Koningstein G."/>
            <person name="Krogh S."/>
            <person name="Kumano M."/>
            <person name="Kurita K."/>
            <person name="Lapidus A."/>
            <person name="Lardinois S."/>
            <person name="Lauber J."/>
            <person name="Lazarevic V."/>
            <person name="Lee S.-M."/>
            <person name="Levine A."/>
            <person name="Liu H."/>
            <person name="Masuda S."/>
            <person name="Mauel C."/>
            <person name="Medigue C."/>
            <person name="Medina N."/>
            <person name="Mellado R.P."/>
            <person name="Mizuno M."/>
            <person name="Moestl D."/>
            <person name="Nakai S."/>
            <person name="Noback M."/>
            <person name="Noone D."/>
            <person name="O'Reilly M."/>
            <person name="Ogawa K."/>
            <person name="Ogiwara A."/>
            <person name="Oudega B."/>
            <person name="Park S.-H."/>
            <person name="Parro V."/>
            <person name="Pohl T.M."/>
            <person name="Portetelle D."/>
            <person name="Porwollik S."/>
            <person name="Prescott A.M."/>
            <person name="Presecan E."/>
            <person name="Pujic P."/>
            <person name="Purnelle B."/>
            <person name="Rapoport G."/>
            <person name="Rey M."/>
            <person name="Reynolds S."/>
            <person name="Rieger M."/>
            <person name="Rivolta C."/>
            <person name="Rocha E."/>
            <person name="Roche B."/>
            <person name="Rose M."/>
            <person name="Sadaie Y."/>
            <person name="Sato T."/>
            <person name="Scanlan E."/>
            <person name="Schleich S."/>
            <person name="Schroeter R."/>
            <person name="Scoffone F."/>
            <person name="Sekiguchi J."/>
            <person name="Sekowska A."/>
            <person name="Seror S.J."/>
            <person name="Serror P."/>
            <person name="Shin B.-S."/>
            <person name="Soldo B."/>
            <person name="Sorokin A."/>
            <person name="Tacconi E."/>
            <person name="Takagi T."/>
            <person name="Takahashi H."/>
            <person name="Takemaru K."/>
            <person name="Takeuchi M."/>
            <person name="Tamakoshi A."/>
            <person name="Tanaka T."/>
            <person name="Terpstra P."/>
            <person name="Tognoni A."/>
            <person name="Tosato V."/>
            <person name="Uchiyama S."/>
            <person name="Vandenbol M."/>
            <person name="Vannier F."/>
            <person name="Vassarotti A."/>
            <person name="Viari A."/>
            <person name="Wambutt R."/>
            <person name="Wedler E."/>
            <person name="Wedler H."/>
            <person name="Weitzenegger T."/>
            <person name="Winters P."/>
            <person name="Wipat A."/>
            <person name="Yamamoto H."/>
            <person name="Yamane K."/>
            <person name="Yasumoto K."/>
            <person name="Yata K."/>
            <person name="Yoshida K."/>
            <person name="Yoshikawa H.-F."/>
            <person name="Zumstein E."/>
            <person name="Yoshikawa H."/>
            <person name="Danchin A."/>
        </authorList>
    </citation>
    <scope>NUCLEOTIDE SEQUENCE [LARGE SCALE GENOMIC DNA]</scope>
    <source>
        <strain>168</strain>
    </source>
</reference>
<name>SP5S_BACSU</name>
<dbReference type="EMBL" id="U27501">
    <property type="protein sequence ID" value="AAA86526.1"/>
    <property type="molecule type" value="Genomic_DNA"/>
</dbReference>
<dbReference type="EMBL" id="AL009126">
    <property type="protein sequence ID" value="CAB13571.1"/>
    <property type="molecule type" value="Genomic_DNA"/>
</dbReference>
<dbReference type="PIR" id="E69716">
    <property type="entry name" value="E69716"/>
</dbReference>
<dbReference type="RefSeq" id="NP_389580.1">
    <property type="nucleotide sequence ID" value="NC_000964.3"/>
</dbReference>
<dbReference type="RefSeq" id="WP_003154135.1">
    <property type="nucleotide sequence ID" value="NZ_OZ025638.1"/>
</dbReference>
<dbReference type="SMR" id="P45693"/>
<dbReference type="FunCoup" id="P45693">
    <property type="interactions" value="32"/>
</dbReference>
<dbReference type="STRING" id="224308.BSU16980"/>
<dbReference type="jPOST" id="P45693"/>
<dbReference type="PaxDb" id="224308-BSU16980"/>
<dbReference type="EnsemblBacteria" id="CAB13571">
    <property type="protein sequence ID" value="CAB13571"/>
    <property type="gene ID" value="BSU_16980"/>
</dbReference>
<dbReference type="GeneID" id="93080815"/>
<dbReference type="GeneID" id="939460"/>
<dbReference type="KEGG" id="bsu:BSU16980"/>
<dbReference type="PATRIC" id="fig|224308.179.peg.1839"/>
<dbReference type="eggNOG" id="COG2359">
    <property type="taxonomic scope" value="Bacteria"/>
</dbReference>
<dbReference type="InParanoid" id="P45693"/>
<dbReference type="OrthoDB" id="9796055at2"/>
<dbReference type="PhylomeDB" id="P45693"/>
<dbReference type="BioCyc" id="BSUB:BSU16980-MONOMER"/>
<dbReference type="PRO" id="PR:P45693"/>
<dbReference type="Proteomes" id="UP000001570">
    <property type="component" value="Chromosome"/>
</dbReference>
<dbReference type="GO" id="GO:0003676">
    <property type="term" value="F:nucleic acid binding"/>
    <property type="evidence" value="ECO:0007669"/>
    <property type="project" value="InterPro"/>
</dbReference>
<dbReference type="GO" id="GO:0000917">
    <property type="term" value="P:division septum assembly"/>
    <property type="evidence" value="ECO:0007669"/>
    <property type="project" value="UniProtKB-KW"/>
</dbReference>
<dbReference type="GO" id="GO:0030435">
    <property type="term" value="P:sporulation resulting in formation of a cellular spore"/>
    <property type="evidence" value="ECO:0007669"/>
    <property type="project" value="UniProtKB-KW"/>
</dbReference>
<dbReference type="FunFam" id="3.30.110.20:FF:000001">
    <property type="entry name" value="Stage V sporulation protein S"/>
    <property type="match status" value="1"/>
</dbReference>
<dbReference type="Gene3D" id="3.30.110.20">
    <property type="entry name" value="Alba-like domain"/>
    <property type="match status" value="1"/>
</dbReference>
<dbReference type="InterPro" id="IPR036882">
    <property type="entry name" value="Alba-like_dom_sf"/>
</dbReference>
<dbReference type="InterPro" id="IPR007347">
    <property type="entry name" value="SpoVS"/>
</dbReference>
<dbReference type="PANTHER" id="PTHR35331">
    <property type="entry name" value="STAGE V SPORULATION PROTEIN S"/>
    <property type="match status" value="1"/>
</dbReference>
<dbReference type="PANTHER" id="PTHR35331:SF1">
    <property type="entry name" value="STAGE V SPORULATION PROTEIN S"/>
    <property type="match status" value="1"/>
</dbReference>
<dbReference type="Pfam" id="PF04232">
    <property type="entry name" value="SpoVS"/>
    <property type="match status" value="1"/>
</dbReference>
<comment type="function">
    <text evidence="1">Interferes with sporulation at an early stage (PubMed:7559352). Seems to play a positive role in allowing cells to progress beyond stage V of sporulation (PubMed:7559352).</text>
</comment>
<comment type="induction">
    <text evidence="1">Induced early in sporulation under the control of sigma-H.</text>
</comment>
<proteinExistence type="evidence at protein level"/>
<organism>
    <name type="scientific">Bacillus subtilis (strain 168)</name>
    <dbReference type="NCBI Taxonomy" id="224308"/>
    <lineage>
        <taxon>Bacteria</taxon>
        <taxon>Bacillati</taxon>
        <taxon>Bacillota</taxon>
        <taxon>Bacilli</taxon>
        <taxon>Bacillales</taxon>
        <taxon>Bacillaceae</taxon>
        <taxon>Bacillus</taxon>
    </lineage>
</organism>
<gene>
    <name evidence="2" type="primary">spoVS</name>
    <name type="ordered locus">BSU16980</name>
</gene>